<organism>
    <name type="scientific">Methanocaldococcus jannaschii (strain ATCC 43067 / DSM 2661 / JAL-1 / JCM 10045 / NBRC 100440)</name>
    <name type="common">Methanococcus jannaschii</name>
    <dbReference type="NCBI Taxonomy" id="243232"/>
    <lineage>
        <taxon>Archaea</taxon>
        <taxon>Methanobacteriati</taxon>
        <taxon>Methanobacteriota</taxon>
        <taxon>Methanomada group</taxon>
        <taxon>Methanococci</taxon>
        <taxon>Methanococcales</taxon>
        <taxon>Methanocaldococcaceae</taxon>
        <taxon>Methanocaldococcus</taxon>
    </lineage>
</organism>
<accession>Q57874</accession>
<reference key="1">
    <citation type="journal article" date="1996" name="Science">
        <title>Complete genome sequence of the methanogenic archaeon, Methanococcus jannaschii.</title>
        <authorList>
            <person name="Bult C.J."/>
            <person name="White O."/>
            <person name="Olsen G.J."/>
            <person name="Zhou L."/>
            <person name="Fleischmann R.D."/>
            <person name="Sutton G.G."/>
            <person name="Blake J.A."/>
            <person name="FitzGerald L.M."/>
            <person name="Clayton R.A."/>
            <person name="Gocayne J.D."/>
            <person name="Kerlavage A.R."/>
            <person name="Dougherty B.A."/>
            <person name="Tomb J.-F."/>
            <person name="Adams M.D."/>
            <person name="Reich C.I."/>
            <person name="Overbeek R."/>
            <person name="Kirkness E.F."/>
            <person name="Weinstock K.G."/>
            <person name="Merrick J.M."/>
            <person name="Glodek A."/>
            <person name="Scott J.L."/>
            <person name="Geoghagen N.S.M."/>
            <person name="Weidman J.F."/>
            <person name="Fuhrmann J.L."/>
            <person name="Nguyen D."/>
            <person name="Utterback T.R."/>
            <person name="Kelley J.M."/>
            <person name="Peterson J.D."/>
            <person name="Sadow P.W."/>
            <person name="Hanna M.C."/>
            <person name="Cotton M.D."/>
            <person name="Roberts K.M."/>
            <person name="Hurst M.A."/>
            <person name="Kaine B.P."/>
            <person name="Borodovsky M."/>
            <person name="Klenk H.-P."/>
            <person name="Fraser C.M."/>
            <person name="Smith H.O."/>
            <person name="Woese C.R."/>
            <person name="Venter J.C."/>
        </authorList>
    </citation>
    <scope>NUCLEOTIDE SEQUENCE [LARGE SCALE GENOMIC DNA]</scope>
    <source>
        <strain>ATCC 43067 / DSM 2661 / JAL-1 / JCM 10045 / NBRC 100440</strain>
    </source>
</reference>
<name>Y432_METJA</name>
<feature type="chain" id="PRO_0000106873" description="Uncharacterized protein MJ0432">
    <location>
        <begin position="1"/>
        <end position="92"/>
    </location>
</feature>
<gene>
    <name type="ordered locus">MJ0432</name>
</gene>
<sequence>MKIFNSVVRVKILALLYGLEYCEFNYLKEKLNLTDGNLEHHLKKLEECGFVETKKSVIKGRVKTIIKITNKGRVAFKNYIYEILQLSKNIEC</sequence>
<dbReference type="EMBL" id="L77117">
    <property type="protein sequence ID" value="AAB98421.1"/>
    <property type="molecule type" value="Genomic_DNA"/>
</dbReference>
<dbReference type="PIR" id="H64353">
    <property type="entry name" value="H64353"/>
</dbReference>
<dbReference type="RefSeq" id="WP_010869931.1">
    <property type="nucleotide sequence ID" value="NC_000909.1"/>
</dbReference>
<dbReference type="SMR" id="Q57874"/>
<dbReference type="STRING" id="243232.MJ_0432"/>
<dbReference type="PaxDb" id="243232-MJ_0432"/>
<dbReference type="EnsemblBacteria" id="AAB98421">
    <property type="protein sequence ID" value="AAB98421"/>
    <property type="gene ID" value="MJ_0432"/>
</dbReference>
<dbReference type="GeneID" id="1451292"/>
<dbReference type="KEGG" id="mja:MJ_0432"/>
<dbReference type="eggNOG" id="arCOG00732">
    <property type="taxonomic scope" value="Archaea"/>
</dbReference>
<dbReference type="HOGENOM" id="CLU_142189_1_1_2"/>
<dbReference type="InParanoid" id="Q57874"/>
<dbReference type="OrthoDB" id="65295at2157"/>
<dbReference type="PhylomeDB" id="Q57874"/>
<dbReference type="Proteomes" id="UP000000805">
    <property type="component" value="Chromosome"/>
</dbReference>
<dbReference type="CDD" id="cd00090">
    <property type="entry name" value="HTH_ARSR"/>
    <property type="match status" value="1"/>
</dbReference>
<dbReference type="Gene3D" id="1.10.10.10">
    <property type="entry name" value="Winged helix-like DNA-binding domain superfamily/Winged helix DNA-binding domain"/>
    <property type="match status" value="1"/>
</dbReference>
<dbReference type="InterPro" id="IPR011991">
    <property type="entry name" value="ArsR-like_HTH"/>
</dbReference>
<dbReference type="InterPro" id="IPR036388">
    <property type="entry name" value="WH-like_DNA-bd_sf"/>
</dbReference>
<dbReference type="InterPro" id="IPR027395">
    <property type="entry name" value="WH_DNA-bd_dom"/>
</dbReference>
<dbReference type="InterPro" id="IPR036390">
    <property type="entry name" value="WH_DNA-bd_sf"/>
</dbReference>
<dbReference type="PANTHER" id="PTHR37318">
    <property type="entry name" value="BSL7504 PROTEIN"/>
    <property type="match status" value="1"/>
</dbReference>
<dbReference type="PANTHER" id="PTHR37318:SF1">
    <property type="entry name" value="BSL7504 PROTEIN"/>
    <property type="match status" value="1"/>
</dbReference>
<dbReference type="Pfam" id="PF13601">
    <property type="entry name" value="HTH_34"/>
    <property type="match status" value="1"/>
</dbReference>
<dbReference type="SUPFAM" id="SSF46785">
    <property type="entry name" value="Winged helix' DNA-binding domain"/>
    <property type="match status" value="1"/>
</dbReference>
<keyword id="KW-1185">Reference proteome</keyword>
<proteinExistence type="predicted"/>
<protein>
    <recommendedName>
        <fullName>Uncharacterized protein MJ0432</fullName>
    </recommendedName>
</protein>